<sequence length="9" mass="1122">GPIPWQRRI</sequence>
<reference evidence="2" key="1">
    <citation type="journal article" date="2005" name="Gen. Comp. Endocrinol.">
        <title>Bradykinin-related peptides and tryptophyllins in the skin secretions of the most primitive extant frog, Ascaphus truei.</title>
        <authorList>
            <person name="Conlon J.M."/>
            <person name="Jouenne T."/>
            <person name="Cosette P."/>
            <person name="Cosquer D."/>
            <person name="Vaudry H."/>
            <person name="Taylor C.K."/>
            <person name="Abel P.W."/>
        </authorList>
    </citation>
    <scope>PROTEIN SEQUENCE</scope>
    <scope>SUBCELLULAR LOCATION</scope>
    <scope>TISSUE SPECIFICITY</scope>
    <scope>MASS SPECTROMETRY</scope>
    <source>
        <tissue evidence="1">Skin secretion</tissue>
    </source>
</reference>
<organism>
    <name type="scientific">Ascaphus truei</name>
    <name type="common">Coastal tailed frog</name>
    <dbReference type="NCBI Taxonomy" id="8439"/>
    <lineage>
        <taxon>Eukaryota</taxon>
        <taxon>Metazoa</taxon>
        <taxon>Chordata</taxon>
        <taxon>Craniata</taxon>
        <taxon>Vertebrata</taxon>
        <taxon>Euteleostomi</taxon>
        <taxon>Amphibia</taxon>
        <taxon>Batrachia</taxon>
        <taxon>Anura</taxon>
        <taxon>Ascaphidae</taxon>
        <taxon>Ascaphus</taxon>
    </lineage>
</organism>
<evidence type="ECO:0000269" key="1">
    <source>
    </source>
</evidence>
<evidence type="ECO:0000305" key="2"/>
<proteinExistence type="evidence at protein level"/>
<protein>
    <recommendedName>
        <fullName>Tryptophyllin-2</fullName>
    </recommendedName>
</protein>
<comment type="function">
    <text>Putative defense peptide.</text>
</comment>
<comment type="subcellular location">
    <subcellularLocation>
        <location evidence="1">Secreted</location>
    </subcellularLocation>
</comment>
<comment type="tissue specificity">
    <text evidence="1">Expressed by the skin glands.</text>
</comment>
<comment type="mass spectrometry" mass="1120.7" method="MALDI" evidence="1"/>
<comment type="similarity">
    <text evidence="2">Belongs to the frog skin active peptide (FSAP) family. Tryptophillin subfamily.</text>
</comment>
<name>TY2_ASCTR</name>
<keyword id="KW-0878">Amphibian defense peptide</keyword>
<keyword id="KW-0903">Direct protein sequencing</keyword>
<keyword id="KW-0964">Secreted</keyword>
<feature type="peptide" id="PRO_0000233925" description="Tryptophyllin-2">
    <location>
        <begin position="1"/>
        <end position="9"/>
    </location>
</feature>
<dbReference type="GO" id="GO:0005576">
    <property type="term" value="C:extracellular region"/>
    <property type="evidence" value="ECO:0000314"/>
    <property type="project" value="UniProtKB"/>
</dbReference>
<dbReference type="GO" id="GO:0006952">
    <property type="term" value="P:defense response"/>
    <property type="evidence" value="ECO:0000270"/>
    <property type="project" value="UniProtKB"/>
</dbReference>
<accession>P84834</accession>